<reference key="1">
    <citation type="journal article" date="2010" name="J. Bacteriol.">
        <title>Genome sequence of the deep-rooted Yersinia pestis strain Angola reveals new insights into the evolution and pangenome of the plague bacterium.</title>
        <authorList>
            <person name="Eppinger M."/>
            <person name="Worsham P.L."/>
            <person name="Nikolich M.P."/>
            <person name="Riley D.R."/>
            <person name="Sebastian Y."/>
            <person name="Mou S."/>
            <person name="Achtman M."/>
            <person name="Lindler L.E."/>
            <person name="Ravel J."/>
        </authorList>
    </citation>
    <scope>NUCLEOTIDE SEQUENCE [LARGE SCALE GENOMIC DNA]</scope>
    <source>
        <strain>Angola</strain>
    </source>
</reference>
<organism>
    <name type="scientific">Yersinia pestis bv. Antiqua (strain Angola)</name>
    <dbReference type="NCBI Taxonomy" id="349746"/>
    <lineage>
        <taxon>Bacteria</taxon>
        <taxon>Pseudomonadati</taxon>
        <taxon>Pseudomonadota</taxon>
        <taxon>Gammaproteobacteria</taxon>
        <taxon>Enterobacterales</taxon>
        <taxon>Yersiniaceae</taxon>
        <taxon>Yersinia</taxon>
    </lineage>
</organism>
<dbReference type="EMBL" id="CP000901">
    <property type="protein sequence ID" value="ABX87278.1"/>
    <property type="molecule type" value="Genomic_DNA"/>
</dbReference>
<dbReference type="RefSeq" id="WP_002210892.1">
    <property type="nucleotide sequence ID" value="NZ_CP009935.1"/>
</dbReference>
<dbReference type="SMR" id="A9R0J7"/>
<dbReference type="GeneID" id="96666536"/>
<dbReference type="KEGG" id="ypg:YpAngola_A2833"/>
<dbReference type="PATRIC" id="fig|349746.12.peg.3869"/>
<dbReference type="HAMAP" id="MF_01549">
    <property type="entry name" value="DsrB"/>
    <property type="match status" value="1"/>
</dbReference>
<dbReference type="InterPro" id="IPR019717">
    <property type="entry name" value="Dextransucrase_DSRB"/>
</dbReference>
<dbReference type="NCBIfam" id="NF007981">
    <property type="entry name" value="PRK10708.1"/>
    <property type="match status" value="1"/>
</dbReference>
<dbReference type="Pfam" id="PF10781">
    <property type="entry name" value="DSRB"/>
    <property type="match status" value="1"/>
</dbReference>
<gene>
    <name evidence="1" type="primary">dsrB</name>
    <name type="ordered locus">YpAngola_A2833</name>
</gene>
<protein>
    <recommendedName>
        <fullName evidence="1">Protein DsrB</fullName>
    </recommendedName>
</protein>
<name>DSRB_YERPG</name>
<evidence type="ECO:0000255" key="1">
    <source>
        <dbReference type="HAMAP-Rule" id="MF_01549"/>
    </source>
</evidence>
<accession>A9R0J7</accession>
<feature type="chain" id="PRO_1000146862" description="Protein DsrB">
    <location>
        <begin position="1"/>
        <end position="63"/>
    </location>
</feature>
<proteinExistence type="inferred from homology"/>
<sequence>MKVNDRVTVKTDGGPRREGVVLEVEEFSEGVMYLVSLADYPAGVWFFNEVDSQDGTFVEPLSQ</sequence>
<comment type="similarity">
    <text evidence="1">Belongs to the DsrB family.</text>
</comment>